<accession>A5G9V6</accession>
<sequence length="113" mass="13585">MKQFAFPKYERLLKRSEFVQFTNARQRIHTAHFILLWTHTEDSTLKIGITVSRKVGNSVIRNRVKRLVREFYRLNKSRFVMAHYNIIAKKGAEQLDFQRLSRELANVLERLHK</sequence>
<feature type="chain" id="PRO_1000194645" description="Ribonuclease P protein component">
    <location>
        <begin position="1"/>
        <end position="113"/>
    </location>
</feature>
<protein>
    <recommendedName>
        <fullName evidence="1">Ribonuclease P protein component</fullName>
        <shortName evidence="1">RNase P protein</shortName>
        <shortName evidence="1">RNaseP protein</shortName>
        <ecNumber evidence="1">3.1.26.5</ecNumber>
    </recommendedName>
    <alternativeName>
        <fullName evidence="1">Protein C5</fullName>
    </alternativeName>
</protein>
<reference key="1">
    <citation type="submission" date="2007-05" db="EMBL/GenBank/DDBJ databases">
        <title>Complete sequence of Geobacter uraniireducens Rf4.</title>
        <authorList>
            <consortium name="US DOE Joint Genome Institute"/>
            <person name="Copeland A."/>
            <person name="Lucas S."/>
            <person name="Lapidus A."/>
            <person name="Barry K."/>
            <person name="Detter J.C."/>
            <person name="Glavina del Rio T."/>
            <person name="Hammon N."/>
            <person name="Israni S."/>
            <person name="Dalin E."/>
            <person name="Tice H."/>
            <person name="Pitluck S."/>
            <person name="Chertkov O."/>
            <person name="Brettin T."/>
            <person name="Bruce D."/>
            <person name="Han C."/>
            <person name="Schmutz J."/>
            <person name="Larimer F."/>
            <person name="Land M."/>
            <person name="Hauser L."/>
            <person name="Kyrpides N."/>
            <person name="Mikhailova N."/>
            <person name="Shelobolina E."/>
            <person name="Aklujkar M."/>
            <person name="Lovley D."/>
            <person name="Richardson P."/>
        </authorList>
    </citation>
    <scope>NUCLEOTIDE SEQUENCE [LARGE SCALE GENOMIC DNA]</scope>
    <source>
        <strain>ATCC BAA-1134 / JCM 13001 / Rf4</strain>
    </source>
</reference>
<dbReference type="EC" id="3.1.26.5" evidence="1"/>
<dbReference type="EMBL" id="CP000698">
    <property type="protein sequence ID" value="ABQ28574.1"/>
    <property type="molecule type" value="Genomic_DNA"/>
</dbReference>
<dbReference type="RefSeq" id="WP_011941200.1">
    <property type="nucleotide sequence ID" value="NC_009483.1"/>
</dbReference>
<dbReference type="SMR" id="A5G9V6"/>
<dbReference type="STRING" id="351605.Gura_4431"/>
<dbReference type="KEGG" id="gur:Gura_4431"/>
<dbReference type="HOGENOM" id="CLU_117179_9_2_7"/>
<dbReference type="OrthoDB" id="9810867at2"/>
<dbReference type="Proteomes" id="UP000006695">
    <property type="component" value="Chromosome"/>
</dbReference>
<dbReference type="GO" id="GO:0030677">
    <property type="term" value="C:ribonuclease P complex"/>
    <property type="evidence" value="ECO:0007669"/>
    <property type="project" value="TreeGrafter"/>
</dbReference>
<dbReference type="GO" id="GO:0042781">
    <property type="term" value="F:3'-tRNA processing endoribonuclease activity"/>
    <property type="evidence" value="ECO:0007669"/>
    <property type="project" value="TreeGrafter"/>
</dbReference>
<dbReference type="GO" id="GO:0004526">
    <property type="term" value="F:ribonuclease P activity"/>
    <property type="evidence" value="ECO:0007669"/>
    <property type="project" value="UniProtKB-UniRule"/>
</dbReference>
<dbReference type="GO" id="GO:0000049">
    <property type="term" value="F:tRNA binding"/>
    <property type="evidence" value="ECO:0007669"/>
    <property type="project" value="UniProtKB-UniRule"/>
</dbReference>
<dbReference type="GO" id="GO:0001682">
    <property type="term" value="P:tRNA 5'-leader removal"/>
    <property type="evidence" value="ECO:0007669"/>
    <property type="project" value="UniProtKB-UniRule"/>
</dbReference>
<dbReference type="Gene3D" id="3.30.230.10">
    <property type="match status" value="1"/>
</dbReference>
<dbReference type="HAMAP" id="MF_00227">
    <property type="entry name" value="RNase_P"/>
    <property type="match status" value="1"/>
</dbReference>
<dbReference type="InterPro" id="IPR020568">
    <property type="entry name" value="Ribosomal_Su5_D2-typ_SF"/>
</dbReference>
<dbReference type="InterPro" id="IPR014721">
    <property type="entry name" value="Ribsml_uS5_D2-typ_fold_subgr"/>
</dbReference>
<dbReference type="InterPro" id="IPR000100">
    <property type="entry name" value="RNase_P"/>
</dbReference>
<dbReference type="NCBIfam" id="TIGR00188">
    <property type="entry name" value="rnpA"/>
    <property type="match status" value="1"/>
</dbReference>
<dbReference type="PANTHER" id="PTHR33992">
    <property type="entry name" value="RIBONUCLEASE P PROTEIN COMPONENT"/>
    <property type="match status" value="1"/>
</dbReference>
<dbReference type="PANTHER" id="PTHR33992:SF1">
    <property type="entry name" value="RIBONUCLEASE P PROTEIN COMPONENT"/>
    <property type="match status" value="1"/>
</dbReference>
<dbReference type="Pfam" id="PF00825">
    <property type="entry name" value="Ribonuclease_P"/>
    <property type="match status" value="1"/>
</dbReference>
<dbReference type="SUPFAM" id="SSF54211">
    <property type="entry name" value="Ribosomal protein S5 domain 2-like"/>
    <property type="match status" value="1"/>
</dbReference>
<proteinExistence type="inferred from homology"/>
<comment type="function">
    <text evidence="1">RNaseP catalyzes the removal of the 5'-leader sequence from pre-tRNA to produce the mature 5'-terminus. It can also cleave other RNA substrates such as 4.5S RNA. The protein component plays an auxiliary but essential role in vivo by binding to the 5'-leader sequence and broadening the substrate specificity of the ribozyme.</text>
</comment>
<comment type="catalytic activity">
    <reaction evidence="1">
        <text>Endonucleolytic cleavage of RNA, removing 5'-extranucleotides from tRNA precursor.</text>
        <dbReference type="EC" id="3.1.26.5"/>
    </reaction>
</comment>
<comment type="subunit">
    <text evidence="1">Consists of a catalytic RNA component (M1 or rnpB) and a protein subunit.</text>
</comment>
<comment type="similarity">
    <text evidence="1">Belongs to the RnpA family.</text>
</comment>
<evidence type="ECO:0000255" key="1">
    <source>
        <dbReference type="HAMAP-Rule" id="MF_00227"/>
    </source>
</evidence>
<keyword id="KW-0255">Endonuclease</keyword>
<keyword id="KW-0378">Hydrolase</keyword>
<keyword id="KW-0540">Nuclease</keyword>
<keyword id="KW-1185">Reference proteome</keyword>
<keyword id="KW-0694">RNA-binding</keyword>
<keyword id="KW-0819">tRNA processing</keyword>
<organism>
    <name type="scientific">Geotalea uraniireducens (strain Rf4)</name>
    <name type="common">Geobacter uraniireducens</name>
    <dbReference type="NCBI Taxonomy" id="351605"/>
    <lineage>
        <taxon>Bacteria</taxon>
        <taxon>Pseudomonadati</taxon>
        <taxon>Thermodesulfobacteriota</taxon>
        <taxon>Desulfuromonadia</taxon>
        <taxon>Geobacterales</taxon>
        <taxon>Geobacteraceae</taxon>
        <taxon>Geotalea</taxon>
    </lineage>
</organism>
<gene>
    <name evidence="1" type="primary">rnpA</name>
    <name type="ordered locus">Gura_4431</name>
</gene>
<name>RNPA_GEOUR</name>